<reference key="1">
    <citation type="submission" date="2008-05" db="EMBL/GenBank/DDBJ databases">
        <title>Genome sequence of Clostridium botulinum Ba4 strain 657.</title>
        <authorList>
            <person name="Shrivastava S."/>
            <person name="Brown J.L."/>
            <person name="Bruce D."/>
            <person name="Detter C."/>
            <person name="Munk C."/>
            <person name="Smith L.A."/>
            <person name="Smith T.J."/>
            <person name="Sutton G."/>
            <person name="Brettin T.S."/>
        </authorList>
    </citation>
    <scope>NUCLEOTIDE SEQUENCE [LARGE SCALE GENOMIC DNA]</scope>
    <source>
        <strain>657 / Type Ba4</strain>
    </source>
</reference>
<protein>
    <recommendedName>
        <fullName evidence="1">Ribosomal RNA small subunit methyltransferase G</fullName>
        <ecNumber evidence="1">2.1.1.-</ecNumber>
    </recommendedName>
    <alternativeName>
        <fullName evidence="1">16S rRNA 7-methylguanosine methyltransferase</fullName>
        <shortName evidence="1">16S rRNA m7G methyltransferase</shortName>
    </alternativeName>
</protein>
<accession>C3KWJ3</accession>
<evidence type="ECO:0000255" key="1">
    <source>
        <dbReference type="HAMAP-Rule" id="MF_00074"/>
    </source>
</evidence>
<dbReference type="EC" id="2.1.1.-" evidence="1"/>
<dbReference type="EMBL" id="CP001083">
    <property type="protein sequence ID" value="ACQ52862.1"/>
    <property type="molecule type" value="Genomic_DNA"/>
</dbReference>
<dbReference type="RefSeq" id="WP_003361819.1">
    <property type="nucleotide sequence ID" value="NC_012658.1"/>
</dbReference>
<dbReference type="SMR" id="C3KWJ3"/>
<dbReference type="KEGG" id="cbi:CLJ_B3980"/>
<dbReference type="HOGENOM" id="CLU_065341_0_0_9"/>
<dbReference type="Proteomes" id="UP000002333">
    <property type="component" value="Chromosome"/>
</dbReference>
<dbReference type="GO" id="GO:0005829">
    <property type="term" value="C:cytosol"/>
    <property type="evidence" value="ECO:0007669"/>
    <property type="project" value="TreeGrafter"/>
</dbReference>
<dbReference type="GO" id="GO:0070043">
    <property type="term" value="F:rRNA (guanine-N7-)-methyltransferase activity"/>
    <property type="evidence" value="ECO:0007669"/>
    <property type="project" value="UniProtKB-UniRule"/>
</dbReference>
<dbReference type="CDD" id="cd02440">
    <property type="entry name" value="AdoMet_MTases"/>
    <property type="match status" value="1"/>
</dbReference>
<dbReference type="FunFam" id="3.40.50.150:FF:000041">
    <property type="entry name" value="Ribosomal RNA small subunit methyltransferase G"/>
    <property type="match status" value="1"/>
</dbReference>
<dbReference type="Gene3D" id="3.40.50.150">
    <property type="entry name" value="Vaccinia Virus protein VP39"/>
    <property type="match status" value="1"/>
</dbReference>
<dbReference type="HAMAP" id="MF_00074">
    <property type="entry name" value="16SrRNA_methyltr_G"/>
    <property type="match status" value="1"/>
</dbReference>
<dbReference type="InterPro" id="IPR003682">
    <property type="entry name" value="rRNA_ssu_MeTfrase_G"/>
</dbReference>
<dbReference type="InterPro" id="IPR029063">
    <property type="entry name" value="SAM-dependent_MTases_sf"/>
</dbReference>
<dbReference type="NCBIfam" id="TIGR00138">
    <property type="entry name" value="rsmG_gidB"/>
    <property type="match status" value="1"/>
</dbReference>
<dbReference type="PANTHER" id="PTHR31760">
    <property type="entry name" value="S-ADENOSYL-L-METHIONINE-DEPENDENT METHYLTRANSFERASES SUPERFAMILY PROTEIN"/>
    <property type="match status" value="1"/>
</dbReference>
<dbReference type="PANTHER" id="PTHR31760:SF0">
    <property type="entry name" value="S-ADENOSYL-L-METHIONINE-DEPENDENT METHYLTRANSFERASES SUPERFAMILY PROTEIN"/>
    <property type="match status" value="1"/>
</dbReference>
<dbReference type="Pfam" id="PF02527">
    <property type="entry name" value="GidB"/>
    <property type="match status" value="1"/>
</dbReference>
<dbReference type="PIRSF" id="PIRSF003078">
    <property type="entry name" value="GidB"/>
    <property type="match status" value="1"/>
</dbReference>
<dbReference type="SUPFAM" id="SSF53335">
    <property type="entry name" value="S-adenosyl-L-methionine-dependent methyltransferases"/>
    <property type="match status" value="1"/>
</dbReference>
<feature type="chain" id="PRO_1000202496" description="Ribosomal RNA small subunit methyltransferase G">
    <location>
        <begin position="1"/>
        <end position="239"/>
    </location>
</feature>
<feature type="binding site" evidence="1">
    <location>
        <position position="78"/>
    </location>
    <ligand>
        <name>S-adenosyl-L-methionine</name>
        <dbReference type="ChEBI" id="CHEBI:59789"/>
    </ligand>
</feature>
<feature type="binding site" evidence="1">
    <location>
        <position position="83"/>
    </location>
    <ligand>
        <name>S-adenosyl-L-methionine</name>
        <dbReference type="ChEBI" id="CHEBI:59789"/>
    </ligand>
</feature>
<feature type="binding site" evidence="1">
    <location>
        <begin position="129"/>
        <end position="130"/>
    </location>
    <ligand>
        <name>S-adenosyl-L-methionine</name>
        <dbReference type="ChEBI" id="CHEBI:59789"/>
    </ligand>
</feature>
<feature type="binding site" evidence="1">
    <location>
        <position position="148"/>
    </location>
    <ligand>
        <name>S-adenosyl-L-methionine</name>
        <dbReference type="ChEBI" id="CHEBI:59789"/>
    </ligand>
</feature>
<organism>
    <name type="scientific">Clostridium botulinum (strain 657 / Type Ba4)</name>
    <dbReference type="NCBI Taxonomy" id="515621"/>
    <lineage>
        <taxon>Bacteria</taxon>
        <taxon>Bacillati</taxon>
        <taxon>Bacillota</taxon>
        <taxon>Clostridia</taxon>
        <taxon>Eubacteriales</taxon>
        <taxon>Clostridiaceae</taxon>
        <taxon>Clostridium</taxon>
    </lineage>
</organism>
<sequence length="239" mass="27190">MEFFNILQSACNDVNLDFNDKKYNQFISYKNLIQEWNKKINLTAIVEDEEIIKKHFIDCIKIFKSSPIGEAKSLIDIGTGAGFPGIPIKILKEDIEITLLDSLQKRINFLNIVIGELQLKNIQCLHGRAEDYAQEIQHRQKYDIAVSRAVANLAVLSEFCIPFVEKGGYFIAMKGPSVEEEITAATKSIEILGGKIEDIMKIDIEDTDLKHNLVIIKKVRETGKRYPRKPGIIKKNPLK</sequence>
<gene>
    <name evidence="1" type="primary">rsmG</name>
    <name type="ordered locus">CLJ_B3980</name>
</gene>
<name>RSMG_CLOB6</name>
<proteinExistence type="inferred from homology"/>
<keyword id="KW-0963">Cytoplasm</keyword>
<keyword id="KW-0489">Methyltransferase</keyword>
<keyword id="KW-0698">rRNA processing</keyword>
<keyword id="KW-0949">S-adenosyl-L-methionine</keyword>
<keyword id="KW-0808">Transferase</keyword>
<comment type="function">
    <text evidence="1">Specifically methylates the N7 position of a guanine in 16S rRNA.</text>
</comment>
<comment type="subcellular location">
    <subcellularLocation>
        <location evidence="1">Cytoplasm</location>
    </subcellularLocation>
</comment>
<comment type="similarity">
    <text evidence="1">Belongs to the methyltransferase superfamily. RNA methyltransferase RsmG family.</text>
</comment>